<sequence length="217" mass="24297">MAARCVRLARRSLPALALSFRPSPRLLCTATKQKNNGQNLEEDLGHCEPKTDPSSADKTLLEEKVKLEEQLKETMEKYKRALADTENLRQRSQKLVEEAKLYGIQGFCKDLLEVADILEKATQSVPKEEVSNNNPHLKSLYEGLVMTEVQIQKVFTKHGLLRLDPIGAKFDPYEHEALFHTPVEGKEPGTVALVSKVGYKLHGRTLRPALVGVVKDA</sequence>
<proteinExistence type="evidence at protein level"/>
<comment type="function">
    <text>Essential component of the PAM complex, a complex required for the translocation of transit peptide-containing proteins from the inner membrane into the mitochondrial matrix in an ATP-dependent manner. Seems to control the nucleotide-dependent binding of mitochondrial HSP70 to substrate proteins.</text>
</comment>
<comment type="subunit">
    <text evidence="1">Probable component of the PAM complex at least composed of a mitochondrial HSP70 protein, GRPEL1 or GRPEL2, TIMM44, TIMM16/PAM16 and TIMM14/DNAJC19. Binds to HSP70, HSC70 and HSJ1B (By similarity).</text>
</comment>
<comment type="subcellular location">
    <subcellularLocation>
        <location>Mitochondrion matrix</location>
    </subcellularLocation>
</comment>
<comment type="tissue specificity">
    <text>Ubiquitous. Particularly abundant in heart, kidney and liver.</text>
</comment>
<comment type="similarity">
    <text evidence="5">Belongs to the GrpE family.</text>
</comment>
<organism>
    <name type="scientific">Rattus norvegicus</name>
    <name type="common">Rat</name>
    <dbReference type="NCBI Taxonomy" id="10116"/>
    <lineage>
        <taxon>Eukaryota</taxon>
        <taxon>Metazoa</taxon>
        <taxon>Chordata</taxon>
        <taxon>Craniata</taxon>
        <taxon>Vertebrata</taxon>
        <taxon>Euteleostomi</taxon>
        <taxon>Mammalia</taxon>
        <taxon>Eutheria</taxon>
        <taxon>Euarchontoglires</taxon>
        <taxon>Glires</taxon>
        <taxon>Rodentia</taxon>
        <taxon>Myomorpha</taxon>
        <taxon>Muroidea</taxon>
        <taxon>Muridae</taxon>
        <taxon>Murinae</taxon>
        <taxon>Rattus</taxon>
    </lineage>
</organism>
<name>GRPE1_RAT</name>
<reference key="1">
    <citation type="journal article" date="1996" name="FEBS Lett.">
        <title>Isolation and characterisation of a cDNA encoding rat mitochondrial GrpE, a stress-inducible nucleotide-exchange factor of ubiquitous appearance in mammalian organs.</title>
        <authorList>
            <person name="Naylor D.J."/>
            <person name="Hoogenraad N.J."/>
            <person name="Hoej P.B."/>
        </authorList>
    </citation>
    <scope>NUCLEOTIDE SEQUENCE [MRNA]</scope>
    <scope>PROTEIN SEQUENCE OF 28-54; 65-72; 110-120; 170-196 AND 205-215</scope>
    <source>
        <strain>Sprague-Dawley</strain>
        <tissue>Liver</tissue>
    </source>
</reference>
<reference key="2">
    <citation type="journal article" date="2004" name="Genome Res.">
        <title>The status, quality, and expansion of the NIH full-length cDNA project: the Mammalian Gene Collection (MGC).</title>
        <authorList>
            <consortium name="The MGC Project Team"/>
        </authorList>
    </citation>
    <scope>NUCLEOTIDE SEQUENCE [LARGE SCALE MRNA]</scope>
    <source>
        <tissue>Thymus</tissue>
    </source>
</reference>
<feature type="transit peptide" description="Mitochondrion" evidence="4">
    <location>
        <begin position="1"/>
        <end position="27"/>
    </location>
</feature>
<feature type="chain" id="PRO_0000013051" description="GrpE protein homolog 1, mitochondrial">
    <location>
        <begin position="28"/>
        <end position="217"/>
    </location>
</feature>
<feature type="modified residue" description="N6-acetyllysine; alternate" evidence="2">
    <location>
        <position position="94"/>
    </location>
</feature>
<feature type="modified residue" description="N6-succinyllysine; alternate" evidence="2">
    <location>
        <position position="94"/>
    </location>
</feature>
<feature type="modified residue" description="N6-acetyllysine" evidence="2">
    <location>
        <position position="100"/>
    </location>
</feature>
<feature type="modified residue" description="N6-succinyllysine" evidence="2">
    <location>
        <position position="120"/>
    </location>
</feature>
<feature type="modified residue" description="N6-acetyllysine; alternate" evidence="3">
    <location>
        <position position="215"/>
    </location>
</feature>
<feature type="modified residue" description="N6-succinyllysine; alternate" evidence="2">
    <location>
        <position position="215"/>
    </location>
</feature>
<dbReference type="EMBL" id="U62940">
    <property type="protein sequence ID" value="AAC53534.1"/>
    <property type="molecule type" value="mRNA"/>
</dbReference>
<dbReference type="EMBL" id="BC097312">
    <property type="protein sequence ID" value="AAH97312.1"/>
    <property type="molecule type" value="mRNA"/>
</dbReference>
<dbReference type="RefSeq" id="NP_077813.1">
    <property type="nucleotide sequence ID" value="NM_024487.4"/>
</dbReference>
<dbReference type="SMR" id="P97576"/>
<dbReference type="BioGRID" id="249476">
    <property type="interactions" value="3"/>
</dbReference>
<dbReference type="FunCoup" id="P97576">
    <property type="interactions" value="3191"/>
</dbReference>
<dbReference type="STRING" id="10116.ENSRNOP00000070967"/>
<dbReference type="iPTMnet" id="P97576"/>
<dbReference type="PhosphoSitePlus" id="P97576"/>
<dbReference type="SwissPalm" id="P97576"/>
<dbReference type="jPOST" id="P97576"/>
<dbReference type="PaxDb" id="10116-ENSRNOP00000008930"/>
<dbReference type="Ensembl" id="ENSRNOT00000008932.6">
    <property type="protein sequence ID" value="ENSRNOP00000008930.3"/>
    <property type="gene ID" value="ENSRNOG00000006593.6"/>
</dbReference>
<dbReference type="GeneID" id="79563"/>
<dbReference type="KEGG" id="rno:79563"/>
<dbReference type="AGR" id="RGD:70947"/>
<dbReference type="CTD" id="80273"/>
<dbReference type="RGD" id="70947">
    <property type="gene designation" value="Grpel1"/>
</dbReference>
<dbReference type="eggNOG" id="KOG3003">
    <property type="taxonomic scope" value="Eukaryota"/>
</dbReference>
<dbReference type="GeneTree" id="ENSGT00390000005589"/>
<dbReference type="HOGENOM" id="CLU_057217_0_1_1"/>
<dbReference type="InParanoid" id="P97576"/>
<dbReference type="OrthoDB" id="201635at2759"/>
<dbReference type="PhylomeDB" id="P97576"/>
<dbReference type="TreeFam" id="TF105284"/>
<dbReference type="PRO" id="PR:P97576"/>
<dbReference type="Proteomes" id="UP000002494">
    <property type="component" value="Chromosome 14"/>
</dbReference>
<dbReference type="Bgee" id="ENSRNOG00000006593">
    <property type="expression patterns" value="Expressed in heart and 19 other cell types or tissues"/>
</dbReference>
<dbReference type="ExpressionAtlas" id="P97576">
    <property type="expression patterns" value="baseline and differential"/>
</dbReference>
<dbReference type="GO" id="GO:0005759">
    <property type="term" value="C:mitochondrial matrix"/>
    <property type="evidence" value="ECO:0000266"/>
    <property type="project" value="RGD"/>
</dbReference>
<dbReference type="GO" id="GO:0001405">
    <property type="term" value="C:PAM complex, Tim23 associated import motor"/>
    <property type="evidence" value="ECO:0000318"/>
    <property type="project" value="GO_Central"/>
</dbReference>
<dbReference type="GO" id="GO:0000774">
    <property type="term" value="F:adenyl-nucleotide exchange factor activity"/>
    <property type="evidence" value="ECO:0000318"/>
    <property type="project" value="GO_Central"/>
</dbReference>
<dbReference type="GO" id="GO:0001671">
    <property type="term" value="F:ATPase activator activity"/>
    <property type="evidence" value="ECO:0000314"/>
    <property type="project" value="RGD"/>
</dbReference>
<dbReference type="GO" id="GO:0051117">
    <property type="term" value="F:ATPase binding"/>
    <property type="evidence" value="ECO:0000353"/>
    <property type="project" value="RGD"/>
</dbReference>
<dbReference type="GO" id="GO:0042802">
    <property type="term" value="F:identical protein binding"/>
    <property type="evidence" value="ECO:0000353"/>
    <property type="project" value="RGD"/>
</dbReference>
<dbReference type="GO" id="GO:0042803">
    <property type="term" value="F:protein homodimerization activity"/>
    <property type="evidence" value="ECO:0007669"/>
    <property type="project" value="InterPro"/>
</dbReference>
<dbReference type="GO" id="GO:0051087">
    <property type="term" value="F:protein-folding chaperone binding"/>
    <property type="evidence" value="ECO:0007669"/>
    <property type="project" value="InterPro"/>
</dbReference>
<dbReference type="GO" id="GO:0051082">
    <property type="term" value="F:unfolded protein binding"/>
    <property type="evidence" value="ECO:0000266"/>
    <property type="project" value="RGD"/>
</dbReference>
<dbReference type="GO" id="GO:0006457">
    <property type="term" value="P:protein folding"/>
    <property type="evidence" value="ECO:0007669"/>
    <property type="project" value="InterPro"/>
</dbReference>
<dbReference type="GO" id="GO:0030150">
    <property type="term" value="P:protein import into mitochondrial matrix"/>
    <property type="evidence" value="ECO:0000318"/>
    <property type="project" value="GO_Central"/>
</dbReference>
<dbReference type="CDD" id="cd00446">
    <property type="entry name" value="GrpE"/>
    <property type="match status" value="1"/>
</dbReference>
<dbReference type="FunFam" id="2.30.22.10:FF:000002">
    <property type="entry name" value="GrpE protein homolog"/>
    <property type="match status" value="1"/>
</dbReference>
<dbReference type="FunFam" id="3.90.20.20:FF:000003">
    <property type="entry name" value="GrpE protein homolog"/>
    <property type="match status" value="1"/>
</dbReference>
<dbReference type="Gene3D" id="3.90.20.20">
    <property type="match status" value="1"/>
</dbReference>
<dbReference type="Gene3D" id="2.30.22.10">
    <property type="entry name" value="Head domain of nucleotide exchange factor GrpE"/>
    <property type="match status" value="1"/>
</dbReference>
<dbReference type="HAMAP" id="MF_01151">
    <property type="entry name" value="GrpE"/>
    <property type="match status" value="1"/>
</dbReference>
<dbReference type="InterPro" id="IPR000740">
    <property type="entry name" value="GrpE"/>
</dbReference>
<dbReference type="InterPro" id="IPR013805">
    <property type="entry name" value="GrpE_coiled_coil"/>
</dbReference>
<dbReference type="InterPro" id="IPR009012">
    <property type="entry name" value="GrpE_head"/>
</dbReference>
<dbReference type="PANTHER" id="PTHR21237">
    <property type="entry name" value="GRPE PROTEIN"/>
    <property type="match status" value="1"/>
</dbReference>
<dbReference type="PANTHER" id="PTHR21237:SF25">
    <property type="entry name" value="GRPE PROTEIN HOMOLOG 1, MITOCHONDRIAL"/>
    <property type="match status" value="1"/>
</dbReference>
<dbReference type="Pfam" id="PF01025">
    <property type="entry name" value="GrpE"/>
    <property type="match status" value="1"/>
</dbReference>
<dbReference type="PRINTS" id="PR00773">
    <property type="entry name" value="GRPEPROTEIN"/>
</dbReference>
<dbReference type="SUPFAM" id="SSF58014">
    <property type="entry name" value="Coiled-coil domain of nucleotide exchange factor GrpE"/>
    <property type="match status" value="1"/>
</dbReference>
<dbReference type="SUPFAM" id="SSF51064">
    <property type="entry name" value="Head domain of nucleotide exchange factor GrpE"/>
    <property type="match status" value="1"/>
</dbReference>
<dbReference type="PROSITE" id="PS01071">
    <property type="entry name" value="GRPE"/>
    <property type="match status" value="1"/>
</dbReference>
<keyword id="KW-0007">Acetylation</keyword>
<keyword id="KW-0143">Chaperone</keyword>
<keyword id="KW-0903">Direct protein sequencing</keyword>
<keyword id="KW-0496">Mitochondrion</keyword>
<keyword id="KW-1185">Reference proteome</keyword>
<keyword id="KW-0809">Transit peptide</keyword>
<gene>
    <name type="primary">Grpel1</name>
    <name type="synonym">Grepel1</name>
</gene>
<evidence type="ECO:0000250" key="1"/>
<evidence type="ECO:0000250" key="2">
    <source>
        <dbReference type="UniProtKB" id="Q99LP6"/>
    </source>
</evidence>
<evidence type="ECO:0000250" key="3">
    <source>
        <dbReference type="UniProtKB" id="Q9HAV7"/>
    </source>
</evidence>
<evidence type="ECO:0000269" key="4">
    <source>
    </source>
</evidence>
<evidence type="ECO:0000305" key="5"/>
<accession>P97576</accession>
<accession>Q4QRA3</accession>
<protein>
    <recommendedName>
        <fullName>GrpE protein homolog 1, mitochondrial</fullName>
    </recommendedName>
    <alternativeName>
        <fullName>Mt-GrpE#1</fullName>
    </alternativeName>
</protein>